<proteinExistence type="inferred from homology"/>
<name>RR18_GOSHI</name>
<comment type="subunit">
    <text>Part of the 30S ribosomal subunit.</text>
</comment>
<comment type="subcellular location">
    <subcellularLocation>
        <location>Plastid</location>
        <location>Chloroplast</location>
    </subcellularLocation>
</comment>
<comment type="similarity">
    <text evidence="1">Belongs to the bacterial ribosomal protein bS18 family.</text>
</comment>
<protein>
    <recommendedName>
        <fullName evidence="1">Small ribosomal subunit protein bS18c</fullName>
    </recommendedName>
    <alternativeName>
        <fullName evidence="2">30S ribosomal protein S18, chloroplastic</fullName>
    </alternativeName>
</protein>
<gene>
    <name evidence="1" type="primary">rps18</name>
</gene>
<feature type="chain" id="PRO_0000276871" description="Small ribosomal subunit protein bS18c">
    <location>
        <begin position="1"/>
        <end position="101"/>
    </location>
</feature>
<geneLocation type="chloroplast"/>
<evidence type="ECO:0000255" key="1">
    <source>
        <dbReference type="HAMAP-Rule" id="MF_00270"/>
    </source>
</evidence>
<evidence type="ECO:0000305" key="2"/>
<organism>
    <name type="scientific">Gossypium hirsutum</name>
    <name type="common">Upland cotton</name>
    <name type="synonym">Gossypium mexicanum</name>
    <dbReference type="NCBI Taxonomy" id="3635"/>
    <lineage>
        <taxon>Eukaryota</taxon>
        <taxon>Viridiplantae</taxon>
        <taxon>Streptophyta</taxon>
        <taxon>Embryophyta</taxon>
        <taxon>Tracheophyta</taxon>
        <taxon>Spermatophyta</taxon>
        <taxon>Magnoliopsida</taxon>
        <taxon>eudicotyledons</taxon>
        <taxon>Gunneridae</taxon>
        <taxon>Pentapetalae</taxon>
        <taxon>rosids</taxon>
        <taxon>malvids</taxon>
        <taxon>Malvales</taxon>
        <taxon>Malvaceae</taxon>
        <taxon>Malvoideae</taxon>
        <taxon>Gossypium</taxon>
    </lineage>
</organism>
<sequence>MDKSKRLFLKSKRSFRRRLPPIQSGDRIDYRNMSLISRFISEQGKILSRRVNRLTLKQQRLITIAIKQARILSSLPFLNNEKQFERSESTTRTTALRTRNK</sequence>
<accession>Q2L928</accession>
<keyword id="KW-0150">Chloroplast</keyword>
<keyword id="KW-0934">Plastid</keyword>
<keyword id="KW-1185">Reference proteome</keyword>
<keyword id="KW-0687">Ribonucleoprotein</keyword>
<keyword id="KW-0689">Ribosomal protein</keyword>
<keyword id="KW-0694">RNA-binding</keyword>
<keyword id="KW-0699">rRNA-binding</keyword>
<dbReference type="EMBL" id="DQ345959">
    <property type="protein sequence ID" value="ABC73650.1"/>
    <property type="molecule type" value="Genomic_DNA"/>
</dbReference>
<dbReference type="RefSeq" id="YP_538957.1">
    <property type="nucleotide sequence ID" value="NC_007944.1"/>
</dbReference>
<dbReference type="SMR" id="Q2L928"/>
<dbReference type="GeneID" id="3989127"/>
<dbReference type="KEGG" id="ghi:3989127"/>
<dbReference type="OMA" id="QRTSPIN"/>
<dbReference type="OrthoDB" id="62412at41938"/>
<dbReference type="Proteomes" id="UP000189702">
    <property type="component" value="Chloroplast Pltd"/>
</dbReference>
<dbReference type="GO" id="GO:0009507">
    <property type="term" value="C:chloroplast"/>
    <property type="evidence" value="ECO:0007669"/>
    <property type="project" value="UniProtKB-SubCell"/>
</dbReference>
<dbReference type="GO" id="GO:1990904">
    <property type="term" value="C:ribonucleoprotein complex"/>
    <property type="evidence" value="ECO:0007669"/>
    <property type="project" value="UniProtKB-KW"/>
</dbReference>
<dbReference type="GO" id="GO:0005840">
    <property type="term" value="C:ribosome"/>
    <property type="evidence" value="ECO:0007669"/>
    <property type="project" value="UniProtKB-KW"/>
</dbReference>
<dbReference type="GO" id="GO:0019843">
    <property type="term" value="F:rRNA binding"/>
    <property type="evidence" value="ECO:0007669"/>
    <property type="project" value="UniProtKB-UniRule"/>
</dbReference>
<dbReference type="GO" id="GO:0003735">
    <property type="term" value="F:structural constituent of ribosome"/>
    <property type="evidence" value="ECO:0007669"/>
    <property type="project" value="InterPro"/>
</dbReference>
<dbReference type="GO" id="GO:0006412">
    <property type="term" value="P:translation"/>
    <property type="evidence" value="ECO:0007669"/>
    <property type="project" value="UniProtKB-UniRule"/>
</dbReference>
<dbReference type="FunFam" id="4.10.640.10:FF:000002">
    <property type="entry name" value="30S ribosomal protein S18, chloroplastic"/>
    <property type="match status" value="1"/>
</dbReference>
<dbReference type="Gene3D" id="4.10.640.10">
    <property type="entry name" value="Ribosomal protein S18"/>
    <property type="match status" value="1"/>
</dbReference>
<dbReference type="HAMAP" id="MF_00270">
    <property type="entry name" value="Ribosomal_bS18"/>
    <property type="match status" value="1"/>
</dbReference>
<dbReference type="InterPro" id="IPR001648">
    <property type="entry name" value="Ribosomal_bS18"/>
</dbReference>
<dbReference type="InterPro" id="IPR018275">
    <property type="entry name" value="Ribosomal_bS18_CS"/>
</dbReference>
<dbReference type="InterPro" id="IPR036870">
    <property type="entry name" value="Ribosomal_bS18_sf"/>
</dbReference>
<dbReference type="NCBIfam" id="TIGR00165">
    <property type="entry name" value="S18"/>
    <property type="match status" value="1"/>
</dbReference>
<dbReference type="PANTHER" id="PTHR13479">
    <property type="entry name" value="30S RIBOSOMAL PROTEIN S18"/>
    <property type="match status" value="1"/>
</dbReference>
<dbReference type="PANTHER" id="PTHR13479:SF40">
    <property type="entry name" value="SMALL RIBOSOMAL SUBUNIT PROTEIN BS18M"/>
    <property type="match status" value="1"/>
</dbReference>
<dbReference type="Pfam" id="PF01084">
    <property type="entry name" value="Ribosomal_S18"/>
    <property type="match status" value="1"/>
</dbReference>
<dbReference type="PRINTS" id="PR00974">
    <property type="entry name" value="RIBOSOMALS18"/>
</dbReference>
<dbReference type="SUPFAM" id="SSF46911">
    <property type="entry name" value="Ribosomal protein S18"/>
    <property type="match status" value="1"/>
</dbReference>
<dbReference type="PROSITE" id="PS00057">
    <property type="entry name" value="RIBOSOMAL_S18"/>
    <property type="match status" value="1"/>
</dbReference>
<reference key="1">
    <citation type="journal article" date="2006" name="BMC Genomics">
        <title>The complete chloroplast genome sequence of Gossypium hirsutum: organization and phylogenetic relationships to other angiosperms.</title>
        <authorList>
            <person name="Lee S.-B."/>
            <person name="Kaittanis C."/>
            <person name="Jansen R.K."/>
            <person name="Hostetler J.B."/>
            <person name="Tallon L.J."/>
            <person name="Town C.D."/>
            <person name="Daniell H."/>
        </authorList>
    </citation>
    <scope>NUCLEOTIDE SEQUENCE [LARGE SCALE GENOMIC DNA]</scope>
    <source>
        <strain>cv. Coker 310FR</strain>
    </source>
</reference>